<proteinExistence type="evidence at protein level"/>
<name>GTPC1_HELPY</name>
<comment type="function">
    <text evidence="2">Converts GTP to dihydroneopterin triphosphate. Is not active with GDP, GMP, ATP, CTP or UTP as substrate.</text>
</comment>
<comment type="catalytic activity">
    <reaction evidence="2">
        <text>GTP + H2O = 7,8-dihydroneopterin 3'-triphosphate + formate + H(+)</text>
        <dbReference type="Rhea" id="RHEA:17473"/>
        <dbReference type="ChEBI" id="CHEBI:15377"/>
        <dbReference type="ChEBI" id="CHEBI:15378"/>
        <dbReference type="ChEBI" id="CHEBI:15740"/>
        <dbReference type="ChEBI" id="CHEBI:37565"/>
        <dbReference type="ChEBI" id="CHEBI:58462"/>
        <dbReference type="EC" id="3.5.4.16"/>
    </reaction>
</comment>
<comment type="biophysicochemical properties">
    <kinetics>
        <KM evidence="2">0.04 mM for GTP</KM>
        <text evidence="2">kcat is 2593 min(-1).</text>
    </kinetics>
    <phDependence>
        <text evidence="2">Optimum pH is about 4.0. Activity strongly decreases above this value.</text>
    </phDependence>
    <temperatureDependence>
        <text evidence="2">Optimum temperature is about 35 degrees Celsius. Activity strongly decreases above this value.</text>
    </temperatureDependence>
</comment>
<comment type="pathway">
    <text>Cofactor biosynthesis; 7,8-dihydroneopterin triphosphate biosynthesis; 7,8-dihydroneopterin triphosphate from GTP: step 1/1.</text>
</comment>
<comment type="subunit">
    <text evidence="1">Homohexamer.</text>
</comment>
<comment type="similarity">
    <text evidence="3">Belongs to the GTP cyclohydrolase I type 2/NIF3 family.</text>
</comment>
<dbReference type="EC" id="3.5.4.16" evidence="2"/>
<dbReference type="EMBL" id="AE000511">
    <property type="protein sequence ID" value="AAD08001.1"/>
    <property type="molecule type" value="Genomic_DNA"/>
</dbReference>
<dbReference type="PIR" id="G64639">
    <property type="entry name" value="G64639"/>
</dbReference>
<dbReference type="RefSeq" id="NP_207751.1">
    <property type="nucleotide sequence ID" value="NC_000915.1"/>
</dbReference>
<dbReference type="RefSeq" id="WP_001229797.1">
    <property type="nucleotide sequence ID" value="NC_018939.1"/>
</dbReference>
<dbReference type="SMR" id="O25613"/>
<dbReference type="IntAct" id="O25613">
    <property type="interactions" value="1"/>
</dbReference>
<dbReference type="STRING" id="85962.HP_0959"/>
<dbReference type="PaxDb" id="85962-C694_04940"/>
<dbReference type="EnsemblBacteria" id="AAD08001">
    <property type="protein sequence ID" value="AAD08001"/>
    <property type="gene ID" value="HP_0959"/>
</dbReference>
<dbReference type="KEGG" id="heo:C694_04940"/>
<dbReference type="KEGG" id="hpy:HP_0959"/>
<dbReference type="PATRIC" id="fig|85962.47.peg.1027"/>
<dbReference type="eggNOG" id="COG0327">
    <property type="taxonomic scope" value="Bacteria"/>
</dbReference>
<dbReference type="InParanoid" id="O25613"/>
<dbReference type="OrthoDB" id="9792792at2"/>
<dbReference type="PhylomeDB" id="O25613"/>
<dbReference type="SABIO-RK" id="O25613"/>
<dbReference type="UniPathway" id="UPA00848">
    <property type="reaction ID" value="UER00151"/>
</dbReference>
<dbReference type="Proteomes" id="UP000000429">
    <property type="component" value="Chromosome"/>
</dbReference>
<dbReference type="GO" id="GO:0005737">
    <property type="term" value="C:cytoplasm"/>
    <property type="evidence" value="ECO:0000318"/>
    <property type="project" value="GO_Central"/>
</dbReference>
<dbReference type="GO" id="GO:0005525">
    <property type="term" value="F:GTP binding"/>
    <property type="evidence" value="ECO:0007669"/>
    <property type="project" value="UniProtKB-KW"/>
</dbReference>
<dbReference type="GO" id="GO:0003934">
    <property type="term" value="F:GTP cyclohydrolase I activity"/>
    <property type="evidence" value="ECO:0007669"/>
    <property type="project" value="UniProtKB-EC"/>
</dbReference>
<dbReference type="GO" id="GO:0046872">
    <property type="term" value="F:metal ion binding"/>
    <property type="evidence" value="ECO:0007669"/>
    <property type="project" value="UniProtKB-KW"/>
</dbReference>
<dbReference type="FunFam" id="3.40.1390.30:FF:000015">
    <property type="entry name" value="Nif3-like dinuclear metal center hexameric protein"/>
    <property type="match status" value="1"/>
</dbReference>
<dbReference type="Gene3D" id="3.40.1390.30">
    <property type="entry name" value="NIF3 (NGG1p interacting factor 3)-like"/>
    <property type="match status" value="2"/>
</dbReference>
<dbReference type="InterPro" id="IPR002678">
    <property type="entry name" value="DUF34/NIF3"/>
</dbReference>
<dbReference type="InterPro" id="IPR036069">
    <property type="entry name" value="DUF34/NIF3_sf"/>
</dbReference>
<dbReference type="NCBIfam" id="TIGR00486">
    <property type="entry name" value="YbgI_SA1388"/>
    <property type="match status" value="1"/>
</dbReference>
<dbReference type="PANTHER" id="PTHR13799:SF14">
    <property type="entry name" value="GTP CYCLOHYDROLASE 1 TYPE 2 HOMOLOG"/>
    <property type="match status" value="1"/>
</dbReference>
<dbReference type="PANTHER" id="PTHR13799">
    <property type="entry name" value="NGG1 INTERACTING FACTOR 3"/>
    <property type="match status" value="1"/>
</dbReference>
<dbReference type="Pfam" id="PF01784">
    <property type="entry name" value="DUF34_NIF3"/>
    <property type="match status" value="1"/>
</dbReference>
<dbReference type="SUPFAM" id="SSF102705">
    <property type="entry name" value="NIF3 (NGG1p interacting factor 3)-like"/>
    <property type="match status" value="1"/>
</dbReference>
<accession>O25613</accession>
<reference key="1">
    <citation type="journal article" date="1997" name="Nature">
        <title>The complete genome sequence of the gastric pathogen Helicobacter pylori.</title>
        <authorList>
            <person name="Tomb J.-F."/>
            <person name="White O."/>
            <person name="Kerlavage A.R."/>
            <person name="Clayton R.A."/>
            <person name="Sutton G.G."/>
            <person name="Fleischmann R.D."/>
            <person name="Ketchum K.A."/>
            <person name="Klenk H.-P."/>
            <person name="Gill S.R."/>
            <person name="Dougherty B.A."/>
            <person name="Nelson K.E."/>
            <person name="Quackenbush J."/>
            <person name="Zhou L."/>
            <person name="Kirkness E.F."/>
            <person name="Peterson S.N."/>
            <person name="Loftus B.J."/>
            <person name="Richardson D.L."/>
            <person name="Dodson R.J."/>
            <person name="Khalak H.G."/>
            <person name="Glodek A."/>
            <person name="McKenney K."/>
            <person name="FitzGerald L.M."/>
            <person name="Lee N."/>
            <person name="Adams M.D."/>
            <person name="Hickey E.K."/>
            <person name="Berg D.E."/>
            <person name="Gocayne J.D."/>
            <person name="Utterback T.R."/>
            <person name="Peterson J.D."/>
            <person name="Kelley J.M."/>
            <person name="Cotton M.D."/>
            <person name="Weidman J.F."/>
            <person name="Fujii C."/>
            <person name="Bowman C."/>
            <person name="Watthey L."/>
            <person name="Wallin E."/>
            <person name="Hayes W.S."/>
            <person name="Borodovsky M."/>
            <person name="Karp P.D."/>
            <person name="Smith H.O."/>
            <person name="Fraser C.M."/>
            <person name="Venter J.C."/>
        </authorList>
    </citation>
    <scope>NUCLEOTIDE SEQUENCE [LARGE SCALE GENOMIC DNA]</scope>
    <source>
        <strain>ATCC 700392 / 26695</strain>
    </source>
</reference>
<reference key="2">
    <citation type="journal article" date="2013" name="PLoS ONE">
        <title>Biochemical characterization of hypothetical proteins from Helicobacter pylori.</title>
        <authorList>
            <person name="Choi H.P."/>
            <person name="Juarez S."/>
            <person name="Ciordia S."/>
            <person name="Fernandez M."/>
            <person name="Bargiela R."/>
            <person name="Albar J.P."/>
            <person name="Mazumdar V."/>
            <person name="Anton B.P."/>
            <person name="Kasif S."/>
            <person name="Ferrer M."/>
            <person name="Steffen M."/>
        </authorList>
    </citation>
    <scope>IDENTIFICATION BY MASS SPECTROMETRY</scope>
    <scope>FUNCTION</scope>
    <scope>CATALYTIC ACTIVITY</scope>
    <scope>SUBSTRATE SPECIFICITY</scope>
    <scope>BIOPHYSICOCHEMICAL PROPERTIES</scope>
    <source>
        <strain>ATCC 700392 / 26695</strain>
    </source>
</reference>
<gene>
    <name type="ordered locus">HP_0959</name>
</gene>
<protein>
    <recommendedName>
        <fullName>GTP cyclohydrolase 1 type 2</fullName>
        <ecNumber evidence="2">3.5.4.16</ecNumber>
    </recommendedName>
    <alternativeName>
        <fullName>GTP cyclohydrolase I</fullName>
    </alternativeName>
</protein>
<keyword id="KW-0342">GTP-binding</keyword>
<keyword id="KW-0378">Hydrolase</keyword>
<keyword id="KW-0479">Metal-binding</keyword>
<keyword id="KW-0547">Nucleotide-binding</keyword>
<keyword id="KW-1185">Reference proteome</keyword>
<feature type="chain" id="PRO_0000147311" description="GTP cyclohydrolase 1 type 2">
    <location>
        <begin position="1"/>
        <end position="243"/>
    </location>
</feature>
<feature type="binding site" evidence="1">
    <location>
        <position position="63"/>
    </location>
    <ligand>
        <name>a divalent metal cation</name>
        <dbReference type="ChEBI" id="CHEBI:60240"/>
        <label>1</label>
    </ligand>
</feature>
<feature type="binding site" evidence="1">
    <location>
        <position position="64"/>
    </location>
    <ligand>
        <name>a divalent metal cation</name>
        <dbReference type="ChEBI" id="CHEBI:60240"/>
        <label>2</label>
    </ligand>
</feature>
<feature type="binding site" evidence="1">
    <location>
        <position position="102"/>
    </location>
    <ligand>
        <name>a divalent metal cation</name>
        <dbReference type="ChEBI" id="CHEBI:60240"/>
        <label>1</label>
    </ligand>
</feature>
<feature type="binding site" evidence="1">
    <location>
        <position position="209"/>
    </location>
    <ligand>
        <name>a divalent metal cation</name>
        <dbReference type="ChEBI" id="CHEBI:60240"/>
        <label>2</label>
    </ligand>
</feature>
<feature type="binding site" evidence="1">
    <location>
        <position position="213"/>
    </location>
    <ligand>
        <name>a divalent metal cation</name>
        <dbReference type="ChEBI" id="CHEBI:60240"/>
        <label>1</label>
    </ligand>
</feature>
<feature type="binding site" evidence="1">
    <location>
        <position position="213"/>
    </location>
    <ligand>
        <name>a divalent metal cation</name>
        <dbReference type="ChEBI" id="CHEBI:60240"/>
        <label>2</label>
    </ligand>
</feature>
<evidence type="ECO:0000250" key="1">
    <source>
        <dbReference type="UniProtKB" id="P0AFP6"/>
    </source>
</evidence>
<evidence type="ECO:0000269" key="2">
    <source>
    </source>
</evidence>
<evidence type="ECO:0000305" key="3"/>
<organism>
    <name type="scientific">Helicobacter pylori (strain ATCC 700392 / 26695)</name>
    <name type="common">Campylobacter pylori</name>
    <dbReference type="NCBI Taxonomy" id="85962"/>
    <lineage>
        <taxon>Bacteria</taxon>
        <taxon>Pseudomonadati</taxon>
        <taxon>Campylobacterota</taxon>
        <taxon>Epsilonproteobacteria</taxon>
        <taxon>Campylobacterales</taxon>
        <taxon>Helicobacteraceae</taxon>
        <taxon>Helicobacter</taxon>
    </lineage>
</organism>
<sequence length="243" mass="26798">MALVKEVLVVLNRLSPFELQESWDNSGLNVGSENSEFSEIVACLEITLKIALNAPQNALIITHHPLIFKPLKTLNDEIYPGNILKILIQKNVSVISMHTNFDKTHLNKHFAHALLEFDGLVEKGLMLVKENANIEFDALVKKIKSSLGVGSLACVKSSQTIKDLAFVCGSGASMFSSLKAQSCLITGDVKYHDAMIAQSLGISLIDATHYYSERGFALIVAEILHSFNYLVTIENFKNPLQII</sequence>